<keyword id="KW-0378">Hydrolase</keyword>
<keyword id="KW-0442">Lipid degradation</keyword>
<keyword id="KW-0443">Lipid metabolism</keyword>
<keyword id="KW-1185">Reference proteome</keyword>
<keyword id="KW-0677">Repeat</keyword>
<comment type="function">
    <text evidence="3 4 5">Plays a role in cell growth. Hydrolyzes membrane phospholipids, such as PtdCho (phosphatidylcholine), producing the free headgroup and PtdOH (phosphatidic acid; signaling molecule on its own). Involved in the inhibition of actin-based motility and endocytosis. Its inhibition causes complete collapse of F-actin organization.</text>
</comment>
<comment type="catalytic activity">
    <reaction>
        <text>a 1,2-diacyl-sn-glycero-3-phosphocholine + H2O = a 1,2-diacyl-sn-glycero-3-phosphate + choline + H(+)</text>
        <dbReference type="Rhea" id="RHEA:14445"/>
        <dbReference type="ChEBI" id="CHEBI:15354"/>
        <dbReference type="ChEBI" id="CHEBI:15377"/>
        <dbReference type="ChEBI" id="CHEBI:15378"/>
        <dbReference type="ChEBI" id="CHEBI:57643"/>
        <dbReference type="ChEBI" id="CHEBI:58608"/>
        <dbReference type="EC" id="3.1.4.4"/>
    </reaction>
</comment>
<comment type="activity regulation">
    <text evidence="3">Inhibited by butan-1-ol.</text>
</comment>
<comment type="similarity">
    <text evidence="6">Belongs to the phospholipase D family.</text>
</comment>
<reference key="1">
    <citation type="journal article" date="2005" name="Nature">
        <title>The genome of the social amoeba Dictyostelium discoideum.</title>
        <authorList>
            <person name="Eichinger L."/>
            <person name="Pachebat J.A."/>
            <person name="Gloeckner G."/>
            <person name="Rajandream M.A."/>
            <person name="Sucgang R."/>
            <person name="Berriman M."/>
            <person name="Song J."/>
            <person name="Olsen R."/>
            <person name="Szafranski K."/>
            <person name="Xu Q."/>
            <person name="Tunggal B."/>
            <person name="Kummerfeld S."/>
            <person name="Madera M."/>
            <person name="Konfortov B.A."/>
            <person name="Rivero F."/>
            <person name="Bankier A.T."/>
            <person name="Lehmann R."/>
            <person name="Hamlin N."/>
            <person name="Davies R."/>
            <person name="Gaudet P."/>
            <person name="Fey P."/>
            <person name="Pilcher K."/>
            <person name="Chen G."/>
            <person name="Saunders D."/>
            <person name="Sodergren E.J."/>
            <person name="Davis P."/>
            <person name="Kerhornou A."/>
            <person name="Nie X."/>
            <person name="Hall N."/>
            <person name="Anjard C."/>
            <person name="Hemphill L."/>
            <person name="Bason N."/>
            <person name="Farbrother P."/>
            <person name="Desany B."/>
            <person name="Just E."/>
            <person name="Morio T."/>
            <person name="Rost R."/>
            <person name="Churcher C.M."/>
            <person name="Cooper J."/>
            <person name="Haydock S."/>
            <person name="van Driessche N."/>
            <person name="Cronin A."/>
            <person name="Goodhead I."/>
            <person name="Muzny D.M."/>
            <person name="Mourier T."/>
            <person name="Pain A."/>
            <person name="Lu M."/>
            <person name="Harper D."/>
            <person name="Lindsay R."/>
            <person name="Hauser H."/>
            <person name="James K.D."/>
            <person name="Quiles M."/>
            <person name="Madan Babu M."/>
            <person name="Saito T."/>
            <person name="Buchrieser C."/>
            <person name="Wardroper A."/>
            <person name="Felder M."/>
            <person name="Thangavelu M."/>
            <person name="Johnson D."/>
            <person name="Knights A."/>
            <person name="Loulseged H."/>
            <person name="Mungall K.L."/>
            <person name="Oliver K."/>
            <person name="Price C."/>
            <person name="Quail M.A."/>
            <person name="Urushihara H."/>
            <person name="Hernandez J."/>
            <person name="Rabbinowitsch E."/>
            <person name="Steffen D."/>
            <person name="Sanders M."/>
            <person name="Ma J."/>
            <person name="Kohara Y."/>
            <person name="Sharp S."/>
            <person name="Simmonds M.N."/>
            <person name="Spiegler S."/>
            <person name="Tivey A."/>
            <person name="Sugano S."/>
            <person name="White B."/>
            <person name="Walker D."/>
            <person name="Woodward J.R."/>
            <person name="Winckler T."/>
            <person name="Tanaka Y."/>
            <person name="Shaulsky G."/>
            <person name="Schleicher M."/>
            <person name="Weinstock G.M."/>
            <person name="Rosenthal A."/>
            <person name="Cox E.C."/>
            <person name="Chisholm R.L."/>
            <person name="Gibbs R.A."/>
            <person name="Loomis W.F."/>
            <person name="Platzer M."/>
            <person name="Kay R.R."/>
            <person name="Williams J.G."/>
            <person name="Dear P.H."/>
            <person name="Noegel A.A."/>
            <person name="Barrell B.G."/>
            <person name="Kuspa A."/>
        </authorList>
    </citation>
    <scope>NUCLEOTIDE SEQUENCE [LARGE SCALE GENOMIC DNA]</scope>
    <source>
        <strain>AX4</strain>
    </source>
</reference>
<reference key="2">
    <citation type="journal article" date="1984" name="Biochim. Biophys. Acta">
        <title>Comparison of the hydrolysis of phosphatidylethanolamine and phosphatidyl(N-acyl)ethanolamine in Dictyostelium discoideum amoebae.</title>
        <authorList>
            <person name="Ellingson J.S."/>
            <person name="Dischinger H.C."/>
        </authorList>
    </citation>
    <scope>FUNCTION</scope>
</reference>
<reference key="3">
    <citation type="journal article" date="1993" name="J. Biol. Chem.">
        <title>Developmentally regulated changes in 1,2-diacylglycerol in Dictyostelium. Regulation by light and G proteins.</title>
        <authorList>
            <person name="Cubitt A.B."/>
            <person name="Dharmawardhane S."/>
            <person name="Firtel R.A."/>
        </authorList>
    </citation>
    <scope>FUNCTION</scope>
</reference>
<reference key="4">
    <citation type="journal article" date="2004" name="FEBS Lett.">
        <title>A distant evolutionary relationship between GPI-specific phospholipase D and bacterial phosphatidylcholine-preferring phospholipase C.</title>
        <authorList>
            <person name="Rigden D.J."/>
        </authorList>
    </citation>
    <scope>NOMENCLATURE</scope>
</reference>
<reference key="5">
    <citation type="journal article" date="2005" name="Biochem. J.">
        <title>Phospholipase D activity is essential for actin localization and actin-based motility in Dictyostelium.</title>
        <authorList>
            <person name="Zouwail S."/>
            <person name="Pettitt T.R."/>
            <person name="Dove S.K."/>
            <person name="Chibalina M.V."/>
            <person name="Powner D.J."/>
            <person name="Haynes L."/>
            <person name="Wakelam M.J.O."/>
            <person name="Insall R.H."/>
        </authorList>
    </citation>
    <scope>ACTIVITY REGULATION</scope>
    <scope>FUNCTION</scope>
</reference>
<reference key="6">
    <citation type="journal article" date="2006" name="Eur. J. Cell Biol.">
        <title>Rho GTPase signaling in Dictyostelium discoideum: insights from the genome.</title>
        <authorList>
            <person name="Vlahou G."/>
            <person name="Rivero F."/>
        </authorList>
    </citation>
    <scope>NOMENCLATURE</scope>
</reference>
<evidence type="ECO:0000255" key="1">
    <source>
        <dbReference type="PROSITE-ProRule" id="PRU00153"/>
    </source>
</evidence>
<evidence type="ECO:0000256" key="2">
    <source>
        <dbReference type="SAM" id="MobiDB-lite"/>
    </source>
</evidence>
<evidence type="ECO:0000269" key="3">
    <source>
    </source>
</evidence>
<evidence type="ECO:0000269" key="4">
    <source>
    </source>
</evidence>
<evidence type="ECO:0000269" key="5">
    <source>
    </source>
</evidence>
<evidence type="ECO:0000305" key="6"/>
<sequence length="1640" mass="188250">MYFFTPPQKRTLKPVVDRVLQQQQQQQQQQQQQSLPKFQPFEVETYSLEDEKYLYNISYFSKEEIKLLYDLFHRINLDLDGFTENIIYQTLSFLVHIPSGIEELSSLFYNEDVIYRKEINSSHRSNQSFNHSNSTTPLNTTNNNIKKPTTTTTTNSNNINNNGNVNGNNTTNLDDILNNHNDNYSSDNSYLHNIYDDIYEDEDDEDDEDDDDDEDEDDEGKEFEQDDEDESTISSMSLKNSQAKRLSKKMNSIDLNVDEISSTHNQNHQNHQNHQNHHHHTTTHMIEKKITTTINKIKQKISNESSGLLCEVVGAGGAGTEGASSSTTTTTTLSNDLQTNESIKFVEDEKQQLKQQLRKQLLKDGNHNSLNNILYDYKHPNDINTPIEELTAAATTTTTTTSTTTTTNDHQNLEKTIISNKTIKKLEGVETIKDTVELEKQQQKQQQTSNVTTAKVKDTILSSSPKTTTTATTNNNNNNNNNNNNNNNNNNNNNSYKYNSYLESSNISNISNASYTDKPMDDEYYYGEYDDEDDSKPPSQEKIESINLYRSQFSIIRDCNLWGGKTLKEDEFDYIDSSSEILKYRMIIKYMVENLFSYIRKRYNLEANKNPSIIHLIEIISIMTRGTLKEKSELVFKLVRKKSEGVVYKTELLEMIQGIDALTVLNVFGLGSIGTPDEVVNNIYREGLSTVNSIQRTPSFPRSDSFYQKSMSSEQPFFKDTSLEMKEFIKRSVSNSDIPRCFGFFDLIYLCYIKPIEDYLKSSIKYKQASGYLYYEKYLGIIKAYSLRWFEVRSGFLIGYKRLFSKPSKVICLFKTNVKIIPKEHPKHHMKLKSLFKGSLSKQIDGNKEATDFVLRRFDDTEQTFISLSSHRASNFVNAIRENSKGSYRYHSFASPQEDINVVPYINGSTYFKGVYKALKHATSEIYIAGWWISPNVSLNRTATSKTPDKYRLDSVLMKKASEGVKIYILIWDETMIAMDLGSRGVKSFFEKMHRRNIKVIRHPHMLPLYWSHHQKVVVVDQRIAFIGGLDLCFGRYDNEYYFVKDNLEINFPGADYINSCIAKPVNNLKDCLVDRNTQPRMPWHDVSISLDGKAARDVTYNFIQRWNHAKDSNRDYKSYPYLITSLETPLNIPHPQPPTQFLHPNTNINNNNNNANNNTNNINNNNNNNNINNLNSSTNTTNNTNNTTTTTNNNNLNTSTNMLPINNNNNNLNTSTNILPNNNNNNNNNNNNNNNNNNNNNNNNNNINNNNTTSTTTTTTTNNNLNSSSNNLNFNISGEIHNNSLPHQLNNQQQQQHHHHHHHHYQPPLPPQQRGTCKVQIVRSVCGWSAGQVLENSIYKAYLNLINLSQHFIYIQNQFFISSVGFTQPNNQIAFAIYKRIEKAVLLNQVFRVILLLPVHCEGDIYDVDTQLIIKYTEKSITGIKTELLKKFPEMDIDQYLSINSLRNWDANGDIIFTEQIYVHSKVLIVDDKIAIIGSANINDRSLNGSRDSEICAIIEDRDLVDSRVNGLPYKAAKFAHNLRCNLWEYHLGLISNPDPLLSDRIKDLVIDSTYHDIWRNMAQRNSAIYKEIFGTTIPENCTKTSQYNRGSIKLTSEALETLCGINGFLIEYNTSMLSELETPTSIYSDIITSMKLFL</sequence>
<proteinExistence type="inferred from homology"/>
<feature type="chain" id="PRO_0000367472" description="Phospholipase D C">
    <location>
        <begin position="1"/>
        <end position="1640"/>
    </location>
</feature>
<feature type="domain" description="PLD phosphodiesterase 1" evidence="1">
    <location>
        <begin position="1009"/>
        <end position="1036"/>
    </location>
</feature>
<feature type="domain" description="PLD phosphodiesterase 2" evidence="1">
    <location>
        <begin position="1460"/>
        <end position="1487"/>
    </location>
</feature>
<feature type="region of interest" description="Disordered" evidence="2">
    <location>
        <begin position="122"/>
        <end position="247"/>
    </location>
</feature>
<feature type="region of interest" description="Disordered" evidence="2">
    <location>
        <begin position="264"/>
        <end position="283"/>
    </location>
</feature>
<feature type="region of interest" description="Disordered" evidence="2">
    <location>
        <begin position="439"/>
        <end position="499"/>
    </location>
</feature>
<feature type="region of interest" description="Disordered" evidence="2">
    <location>
        <begin position="521"/>
        <end position="541"/>
    </location>
</feature>
<feature type="region of interest" description="Disordered" evidence="2">
    <location>
        <begin position="1149"/>
        <end position="1315"/>
    </location>
</feature>
<feature type="compositionally biased region" description="Polar residues" evidence="2">
    <location>
        <begin position="122"/>
        <end position="132"/>
    </location>
</feature>
<feature type="compositionally biased region" description="Low complexity" evidence="2">
    <location>
        <begin position="133"/>
        <end position="193"/>
    </location>
</feature>
<feature type="compositionally biased region" description="Acidic residues" evidence="2">
    <location>
        <begin position="197"/>
        <end position="231"/>
    </location>
</feature>
<feature type="compositionally biased region" description="Polar residues" evidence="2">
    <location>
        <begin position="232"/>
        <end position="247"/>
    </location>
</feature>
<feature type="compositionally biased region" description="Low complexity" evidence="2">
    <location>
        <begin position="264"/>
        <end position="273"/>
    </location>
</feature>
<feature type="compositionally biased region" description="Low complexity" evidence="2">
    <location>
        <begin position="467"/>
        <end position="499"/>
    </location>
</feature>
<feature type="compositionally biased region" description="Acidic residues" evidence="2">
    <location>
        <begin position="521"/>
        <end position="534"/>
    </location>
</feature>
<feature type="compositionally biased region" description="Low complexity" evidence="2">
    <location>
        <begin position="1149"/>
        <end position="1274"/>
    </location>
</feature>
<feature type="compositionally biased region" description="Low complexity" evidence="2">
    <location>
        <begin position="1282"/>
        <end position="1296"/>
    </location>
</feature>
<feature type="compositionally biased region" description="Basic residues" evidence="2">
    <location>
        <begin position="1297"/>
        <end position="1306"/>
    </location>
</feature>
<feature type="active site" evidence="1">
    <location>
        <position position="1014"/>
    </location>
</feature>
<feature type="active site" evidence="1">
    <location>
        <position position="1016"/>
    </location>
</feature>
<feature type="active site" evidence="1">
    <location>
        <position position="1021"/>
    </location>
</feature>
<feature type="active site" evidence="1">
    <location>
        <position position="1465"/>
    </location>
</feature>
<feature type="active site" evidence="1">
    <location>
        <position position="1467"/>
    </location>
</feature>
<feature type="active site" evidence="1">
    <location>
        <position position="1472"/>
    </location>
</feature>
<accession>Q54Z25</accession>
<organism>
    <name type="scientific">Dictyostelium discoideum</name>
    <name type="common">Social amoeba</name>
    <dbReference type="NCBI Taxonomy" id="44689"/>
    <lineage>
        <taxon>Eukaryota</taxon>
        <taxon>Amoebozoa</taxon>
        <taxon>Evosea</taxon>
        <taxon>Eumycetozoa</taxon>
        <taxon>Dictyostelia</taxon>
        <taxon>Dictyosteliales</taxon>
        <taxon>Dictyosteliaceae</taxon>
        <taxon>Dictyostelium</taxon>
    </lineage>
</organism>
<gene>
    <name type="primary">pldC</name>
    <name type="synonym">pld1</name>
    <name type="ORF">DDB_G0277949</name>
</gene>
<protein>
    <recommendedName>
        <fullName>Phospholipase D C</fullName>
        <ecNumber>3.1.4.4</ecNumber>
    </recommendedName>
    <alternativeName>
        <fullName>Phosphatase D1</fullName>
        <shortName>PLD 1</shortName>
    </alternativeName>
</protein>
<name>PLDC_DICDI</name>
<dbReference type="EC" id="3.1.4.4"/>
<dbReference type="EMBL" id="AAFI02000023">
    <property type="protein sequence ID" value="EAL68147.1"/>
    <property type="molecule type" value="Genomic_DNA"/>
</dbReference>
<dbReference type="RefSeq" id="XP_642027.1">
    <property type="nucleotide sequence ID" value="XM_636935.1"/>
</dbReference>
<dbReference type="SMR" id="Q54Z25"/>
<dbReference type="FunCoup" id="Q54Z25">
    <property type="interactions" value="79"/>
</dbReference>
<dbReference type="STRING" id="44689.Q54Z25"/>
<dbReference type="PaxDb" id="44689-DDB0231508"/>
<dbReference type="EnsemblProtists" id="EAL68147">
    <property type="protein sequence ID" value="EAL68147"/>
    <property type="gene ID" value="DDB_G0277949"/>
</dbReference>
<dbReference type="GeneID" id="8621238"/>
<dbReference type="KEGG" id="ddi:DDB_G0277949"/>
<dbReference type="dictyBase" id="DDB_G0277949">
    <property type="gene designation" value="pldC"/>
</dbReference>
<dbReference type="VEuPathDB" id="AmoebaDB:DDB_G0277949"/>
<dbReference type="eggNOG" id="KOG1329">
    <property type="taxonomic scope" value="Eukaryota"/>
</dbReference>
<dbReference type="HOGENOM" id="CLU_242871_0_0_1"/>
<dbReference type="InParanoid" id="Q54Z25"/>
<dbReference type="OMA" id="RCFGFFD"/>
<dbReference type="PhylomeDB" id="Q54Z25"/>
<dbReference type="BRENDA" id="3.1.4.4">
    <property type="organism ID" value="1939"/>
</dbReference>
<dbReference type="Reactome" id="R-DDI-1483166">
    <property type="pathway name" value="Synthesis of PA"/>
</dbReference>
<dbReference type="Reactome" id="R-DDI-2029485">
    <property type="pathway name" value="Role of phospholipids in phagocytosis"/>
</dbReference>
<dbReference type="Reactome" id="R-DDI-6798695">
    <property type="pathway name" value="Neutrophil degranulation"/>
</dbReference>
<dbReference type="Reactome" id="R-DDI-9013149">
    <property type="pathway name" value="RAC1 GTPase cycle"/>
</dbReference>
<dbReference type="Reactome" id="R-DDI-9013404">
    <property type="pathway name" value="RAC2 GTPase cycle"/>
</dbReference>
<dbReference type="Reactome" id="R-DDI-9013408">
    <property type="pathway name" value="RHOG GTPase cycle"/>
</dbReference>
<dbReference type="PRO" id="PR:Q54Z25"/>
<dbReference type="Proteomes" id="UP000002195">
    <property type="component" value="Chromosome 3"/>
</dbReference>
<dbReference type="GO" id="GO:0004630">
    <property type="term" value="F:phospholipase D activity"/>
    <property type="evidence" value="ECO:0000250"/>
    <property type="project" value="dictyBase"/>
</dbReference>
<dbReference type="GO" id="GO:0009395">
    <property type="term" value="P:phospholipid catabolic process"/>
    <property type="evidence" value="ECO:0000318"/>
    <property type="project" value="GO_Central"/>
</dbReference>
<dbReference type="GO" id="GO:0006644">
    <property type="term" value="P:phospholipid metabolic process"/>
    <property type="evidence" value="ECO:0000250"/>
    <property type="project" value="dictyBase"/>
</dbReference>
<dbReference type="CDD" id="cd09141">
    <property type="entry name" value="PLDc_vPLD1_2_yPLD_like_2"/>
    <property type="match status" value="1"/>
</dbReference>
<dbReference type="FunFam" id="3.30.870.10:FF:000053">
    <property type="entry name" value="Phospholipase"/>
    <property type="match status" value="1"/>
</dbReference>
<dbReference type="Gene3D" id="3.30.870.10">
    <property type="entry name" value="Endonuclease Chain A"/>
    <property type="match status" value="2"/>
</dbReference>
<dbReference type="InterPro" id="IPR025202">
    <property type="entry name" value="PLD-like_dom"/>
</dbReference>
<dbReference type="InterPro" id="IPR001736">
    <property type="entry name" value="PLipase_D/transphosphatidylase"/>
</dbReference>
<dbReference type="InterPro" id="IPR015679">
    <property type="entry name" value="PLipase_D_fam"/>
</dbReference>
<dbReference type="PANTHER" id="PTHR18896">
    <property type="entry name" value="PHOSPHOLIPASE D"/>
    <property type="match status" value="1"/>
</dbReference>
<dbReference type="PANTHER" id="PTHR18896:SF195">
    <property type="entry name" value="PHOSPHOLIPASE D C"/>
    <property type="match status" value="1"/>
</dbReference>
<dbReference type="Pfam" id="PF00614">
    <property type="entry name" value="PLDc"/>
    <property type="match status" value="1"/>
</dbReference>
<dbReference type="Pfam" id="PF13091">
    <property type="entry name" value="PLDc_2"/>
    <property type="match status" value="1"/>
</dbReference>
<dbReference type="SMART" id="SM00155">
    <property type="entry name" value="PLDc"/>
    <property type="match status" value="2"/>
</dbReference>
<dbReference type="SUPFAM" id="SSF56024">
    <property type="entry name" value="Phospholipase D/nuclease"/>
    <property type="match status" value="2"/>
</dbReference>
<dbReference type="PROSITE" id="PS50035">
    <property type="entry name" value="PLD"/>
    <property type="match status" value="2"/>
</dbReference>